<protein>
    <recommendedName>
        <fullName evidence="1">Cytochrome c biogenesis ATP-binding export protein CcmA</fullName>
        <ecNumber evidence="1">7.6.2.5</ecNumber>
    </recommendedName>
    <alternativeName>
        <fullName evidence="1">Heme exporter protein A</fullName>
    </alternativeName>
</protein>
<reference key="1">
    <citation type="submission" date="2006-03" db="EMBL/GenBank/DDBJ databases">
        <title>Complete sequence of Rhodopseudomonas palustris BisB5.</title>
        <authorList>
            <consortium name="US DOE Joint Genome Institute"/>
            <person name="Copeland A."/>
            <person name="Lucas S."/>
            <person name="Lapidus A."/>
            <person name="Barry K."/>
            <person name="Detter J.C."/>
            <person name="Glavina del Rio T."/>
            <person name="Hammon N."/>
            <person name="Israni S."/>
            <person name="Dalin E."/>
            <person name="Tice H."/>
            <person name="Pitluck S."/>
            <person name="Chain P."/>
            <person name="Malfatti S."/>
            <person name="Shin M."/>
            <person name="Vergez L."/>
            <person name="Schmutz J."/>
            <person name="Larimer F."/>
            <person name="Land M."/>
            <person name="Hauser L."/>
            <person name="Pelletier D.A."/>
            <person name="Kyrpides N."/>
            <person name="Lykidis A."/>
            <person name="Oda Y."/>
            <person name="Harwood C.S."/>
            <person name="Richardson P."/>
        </authorList>
    </citation>
    <scope>NUCLEOTIDE SEQUENCE [LARGE SCALE GENOMIC DNA]</scope>
    <source>
        <strain>BisB5</strain>
    </source>
</reference>
<accession>Q13DS7</accession>
<comment type="function">
    <text evidence="1">Part of the ABC transporter complex CcmAB involved in the biogenesis of c-type cytochromes; once thought to export heme, this seems not to be the case, but its exact role is uncertain. Responsible for energy coupling to the transport system.</text>
</comment>
<comment type="catalytic activity">
    <reaction evidence="1">
        <text>heme b(in) + ATP + H2O = heme b(out) + ADP + phosphate + H(+)</text>
        <dbReference type="Rhea" id="RHEA:19261"/>
        <dbReference type="ChEBI" id="CHEBI:15377"/>
        <dbReference type="ChEBI" id="CHEBI:15378"/>
        <dbReference type="ChEBI" id="CHEBI:30616"/>
        <dbReference type="ChEBI" id="CHEBI:43474"/>
        <dbReference type="ChEBI" id="CHEBI:60344"/>
        <dbReference type="ChEBI" id="CHEBI:456216"/>
        <dbReference type="EC" id="7.6.2.5"/>
    </reaction>
</comment>
<comment type="subunit">
    <text evidence="1">The complex is composed of two ATP-binding proteins (CcmA) and two transmembrane proteins (CcmB).</text>
</comment>
<comment type="subcellular location">
    <subcellularLocation>
        <location evidence="1">Cell inner membrane</location>
        <topology evidence="1">Peripheral membrane protein</topology>
    </subcellularLocation>
</comment>
<comment type="similarity">
    <text evidence="1">Belongs to the ABC transporter superfamily. CcmA exporter (TC 3.A.1.107) family.</text>
</comment>
<feature type="chain" id="PRO_0000271950" description="Cytochrome c biogenesis ATP-binding export protein CcmA">
    <location>
        <begin position="1"/>
        <end position="200"/>
    </location>
</feature>
<feature type="domain" description="ABC transporter" evidence="1">
    <location>
        <begin position="3"/>
        <end position="200"/>
    </location>
</feature>
<feature type="binding site" evidence="1">
    <location>
        <begin position="35"/>
        <end position="42"/>
    </location>
    <ligand>
        <name>ATP</name>
        <dbReference type="ChEBI" id="CHEBI:30616"/>
    </ligand>
</feature>
<sequence>MWLSGRGLRCVRGGREVFDGLGFEAAGGEALALVGHNGAGKTSLLRLIAGLLAPAAGTITFDGGEPDTPVAEQAHYLGHRDALKPSLSVTENLAFWREFLGGEPTDLPAAIEAVGLAHAAELPAAYLSAGQRRRLSIARLLVVRRPIWLLDEPTSALDVRGQEAFGRLMSDHLAGGGLIIAATHSPLGIAAREMRIGAAA</sequence>
<name>CCMA_RHOPS</name>
<evidence type="ECO:0000255" key="1">
    <source>
        <dbReference type="HAMAP-Rule" id="MF_01707"/>
    </source>
</evidence>
<keyword id="KW-0067">ATP-binding</keyword>
<keyword id="KW-0997">Cell inner membrane</keyword>
<keyword id="KW-1003">Cell membrane</keyword>
<keyword id="KW-0201">Cytochrome c-type biogenesis</keyword>
<keyword id="KW-0472">Membrane</keyword>
<keyword id="KW-0547">Nucleotide-binding</keyword>
<keyword id="KW-1278">Translocase</keyword>
<keyword id="KW-0813">Transport</keyword>
<gene>
    <name evidence="1" type="primary">ccmA</name>
    <name type="ordered locus">RPD_0524</name>
</gene>
<dbReference type="EC" id="7.6.2.5" evidence="1"/>
<dbReference type="EMBL" id="CP000283">
    <property type="protein sequence ID" value="ABE37762.1"/>
    <property type="molecule type" value="Genomic_DNA"/>
</dbReference>
<dbReference type="SMR" id="Q13DS7"/>
<dbReference type="STRING" id="316057.RPD_0524"/>
<dbReference type="KEGG" id="rpd:RPD_0524"/>
<dbReference type="eggNOG" id="COG4133">
    <property type="taxonomic scope" value="Bacteria"/>
</dbReference>
<dbReference type="HOGENOM" id="CLU_000604_1_2_5"/>
<dbReference type="BioCyc" id="RPAL316057:RPD_RS02685-MONOMER"/>
<dbReference type="Proteomes" id="UP000001818">
    <property type="component" value="Chromosome"/>
</dbReference>
<dbReference type="GO" id="GO:0005886">
    <property type="term" value="C:plasma membrane"/>
    <property type="evidence" value="ECO:0007669"/>
    <property type="project" value="UniProtKB-SubCell"/>
</dbReference>
<dbReference type="GO" id="GO:0015439">
    <property type="term" value="F:ABC-type heme transporter activity"/>
    <property type="evidence" value="ECO:0007669"/>
    <property type="project" value="UniProtKB-EC"/>
</dbReference>
<dbReference type="GO" id="GO:0005524">
    <property type="term" value="F:ATP binding"/>
    <property type="evidence" value="ECO:0007669"/>
    <property type="project" value="UniProtKB-KW"/>
</dbReference>
<dbReference type="GO" id="GO:0016887">
    <property type="term" value="F:ATP hydrolysis activity"/>
    <property type="evidence" value="ECO:0007669"/>
    <property type="project" value="InterPro"/>
</dbReference>
<dbReference type="GO" id="GO:0017004">
    <property type="term" value="P:cytochrome complex assembly"/>
    <property type="evidence" value="ECO:0007669"/>
    <property type="project" value="UniProtKB-KW"/>
</dbReference>
<dbReference type="Gene3D" id="3.40.50.300">
    <property type="entry name" value="P-loop containing nucleotide triphosphate hydrolases"/>
    <property type="match status" value="1"/>
</dbReference>
<dbReference type="InterPro" id="IPR003593">
    <property type="entry name" value="AAA+_ATPase"/>
</dbReference>
<dbReference type="InterPro" id="IPR003439">
    <property type="entry name" value="ABC_transporter-like_ATP-bd"/>
</dbReference>
<dbReference type="InterPro" id="IPR017871">
    <property type="entry name" value="ABC_transporter-like_CS"/>
</dbReference>
<dbReference type="InterPro" id="IPR005895">
    <property type="entry name" value="ABC_transptr_haem_export_CcmA"/>
</dbReference>
<dbReference type="InterPro" id="IPR027417">
    <property type="entry name" value="P-loop_NTPase"/>
</dbReference>
<dbReference type="NCBIfam" id="TIGR01189">
    <property type="entry name" value="ccmA"/>
    <property type="match status" value="1"/>
</dbReference>
<dbReference type="PANTHER" id="PTHR43499">
    <property type="entry name" value="ABC TRANSPORTER I FAMILY MEMBER 1"/>
    <property type="match status" value="1"/>
</dbReference>
<dbReference type="PANTHER" id="PTHR43499:SF1">
    <property type="entry name" value="ABC TRANSPORTER I FAMILY MEMBER 1"/>
    <property type="match status" value="1"/>
</dbReference>
<dbReference type="Pfam" id="PF00005">
    <property type="entry name" value="ABC_tran"/>
    <property type="match status" value="1"/>
</dbReference>
<dbReference type="SMART" id="SM00382">
    <property type="entry name" value="AAA"/>
    <property type="match status" value="1"/>
</dbReference>
<dbReference type="SUPFAM" id="SSF52540">
    <property type="entry name" value="P-loop containing nucleoside triphosphate hydrolases"/>
    <property type="match status" value="1"/>
</dbReference>
<dbReference type="PROSITE" id="PS00211">
    <property type="entry name" value="ABC_TRANSPORTER_1"/>
    <property type="match status" value="1"/>
</dbReference>
<dbReference type="PROSITE" id="PS50893">
    <property type="entry name" value="ABC_TRANSPORTER_2"/>
    <property type="match status" value="1"/>
</dbReference>
<dbReference type="PROSITE" id="PS51243">
    <property type="entry name" value="CCMA"/>
    <property type="match status" value="1"/>
</dbReference>
<proteinExistence type="inferred from homology"/>
<organism>
    <name type="scientific">Rhodopseudomonas palustris (strain BisB5)</name>
    <dbReference type="NCBI Taxonomy" id="316057"/>
    <lineage>
        <taxon>Bacteria</taxon>
        <taxon>Pseudomonadati</taxon>
        <taxon>Pseudomonadota</taxon>
        <taxon>Alphaproteobacteria</taxon>
        <taxon>Hyphomicrobiales</taxon>
        <taxon>Nitrobacteraceae</taxon>
        <taxon>Rhodopseudomonas</taxon>
    </lineage>
</organism>